<feature type="chain" id="PRO_0000453516" description="Chlorobenzene dioxygenase subunit beta">
    <location>
        <begin position="1"/>
        <end position="187"/>
    </location>
</feature>
<organism>
    <name type="scientific">Cupriavidus sp. (strain PS12)</name>
    <dbReference type="NCBI Taxonomy" id="393999"/>
    <lineage>
        <taxon>Bacteria</taxon>
        <taxon>Pseudomonadati</taxon>
        <taxon>Pseudomonadota</taxon>
        <taxon>Betaproteobacteria</taxon>
        <taxon>Burkholderiales</taxon>
        <taxon>Burkholderiaceae</taxon>
        <taxon>Cupriavidus</taxon>
    </lineage>
</organism>
<name>TECA2_CUPXP</name>
<reference key="1">
    <citation type="journal article" date="1997" name="Eur. J. Biochem.">
        <title>Genetic and biochemical characterization of the broad spectrum chlorobenzene dioxygenase from Burkholderia sp. strain PS12--dechlorination of 1,2,4,5-tetrachlorobenzene.</title>
        <authorList>
            <person name="Beil S."/>
            <person name="Happe B."/>
            <person name="Timmis K.N."/>
            <person name="Pieper D.H."/>
        </authorList>
    </citation>
    <scope>NUCLEOTIDE SEQUENCE [GENOMIC DNA]</scope>
    <scope>FUNCTION</scope>
    <scope>CATALYTIC ACTIVITY</scope>
    <scope>SUBUNIT</scope>
    <source>
        <strain>PS12</strain>
    </source>
</reference>
<reference key="2">
    <citation type="journal article" date="1998" name="J. Bacteriol.">
        <title>Identification of chlorobenzene dioxygenase sequence elements involved in dechlorination of 1,2,4,5-tetrachlorobenzene.</title>
        <authorList>
            <person name="Beil S."/>
            <person name="Mason J.R."/>
            <person name="Timmis K.N."/>
            <person name="Pieper D.H."/>
        </authorList>
    </citation>
    <scope>FUNCTION</scope>
    <source>
        <strain>PS12</strain>
    </source>
</reference>
<reference key="3">
    <citation type="journal article" date="2001" name="Appl. Environ. Microbiol.">
        <title>Transformation of chlorinated benzenes and toluenes by Ralstonia sp. strain PS12 tecA (tetrachlorobenzene dioxygenase) and tecB (chlorobenzene dihydrodiol dehydrogenase) gene products.</title>
        <authorList>
            <person name="Pollmann K."/>
            <person name="Beil S."/>
            <person name="Pieper D.H."/>
        </authorList>
    </citation>
    <scope>FUNCTION</scope>
    <scope>CATALYTIC ACTIVITY</scope>
    <source>
        <strain>PS12</strain>
    </source>
</reference>
<keyword id="KW-0058">Aromatic hydrocarbons catabolism</keyword>
<keyword id="KW-0223">Dioxygenase</keyword>
<keyword id="KW-0520">NAD</keyword>
<keyword id="KW-0560">Oxidoreductase</keyword>
<gene>
    <name evidence="4" type="primary">tecA2</name>
</gene>
<evidence type="ECO:0000269" key="1">
    <source>
    </source>
</evidence>
<evidence type="ECO:0000269" key="2">
    <source>
    </source>
</evidence>
<evidence type="ECO:0000269" key="3">
    <source>
    </source>
</evidence>
<evidence type="ECO:0000303" key="4">
    <source>
    </source>
</evidence>
<evidence type="ECO:0000305" key="5"/>
<evidence type="ECO:0000305" key="6">
    <source>
    </source>
</evidence>
<proteinExistence type="evidence at protein level"/>
<comment type="function">
    <text evidence="1 2 3">Part of the oxygenase component of the chlorobenzene dioxygenase system that catalyzes the dihydroxylation of a range of aromatic compounds, including chlorinated benzenes and toluenes, and dinuclear aromatics such as biphenyl and dibenzo-p-dioxin (PubMed:11526005, PubMed:9249026, PubMed:9791099). The beta subunit is not directly involved in the control of substrate specificity (PubMed:9791099).</text>
</comment>
<comment type="catalytic activity">
    <reaction evidence="1 2">
        <text>chlorobenzene + NADH + O2 + H(+) = (1R,2R)-3-chlorocyclohexa-3,5-diene-1,2-diol + NAD(+)</text>
        <dbReference type="Rhea" id="RHEA:57512"/>
        <dbReference type="ChEBI" id="CHEBI:15378"/>
        <dbReference type="ChEBI" id="CHEBI:15379"/>
        <dbReference type="ChEBI" id="CHEBI:19981"/>
        <dbReference type="ChEBI" id="CHEBI:28097"/>
        <dbReference type="ChEBI" id="CHEBI:57540"/>
        <dbReference type="ChEBI" id="CHEBI:57945"/>
        <dbReference type="EC" id="1.14.12.26"/>
    </reaction>
</comment>
<comment type="pathway">
    <text evidence="5">Aromatic compound metabolism.</text>
</comment>
<comment type="subunit">
    <text evidence="6">This dioxygenase system consists of four proteins: the two subunits of the oxygenase component (TecA1 and TecA2), a ferredoxin (TecA3) and a ferredoxin reductase (TecA4).</text>
</comment>
<comment type="similarity">
    <text evidence="5">Belongs to the bacterial ring-hydroxylating dioxygenase beta subunit family.</text>
</comment>
<sequence length="187" mass="21893">MLDSVKRADVFLRKPAPVAPELQHEIEQFYYWEAKLLNDRRFEEWFALLAADIHYFMPIRTTRIMRDARLEYSGTGEHAHFDDDAAMMKGRLRKVTSDVGWSENPASRTRHLVSNVMIADGPVEGEYEISSAFIVYRNRLERQLDIFAGERRDTLRRNKTETGFEIVNRTILIDQSTILANNLSFFF</sequence>
<accession>O24677</accession>
<protein>
    <recommendedName>
        <fullName evidence="5">Chlorobenzene dioxygenase subunit beta</fullName>
        <ecNumber evidence="1 2">1.14.12.26</ecNumber>
    </recommendedName>
</protein>
<dbReference type="EC" id="1.14.12.26" evidence="1 2"/>
<dbReference type="EMBL" id="U78099">
    <property type="protein sequence ID" value="AAC46391.1"/>
    <property type="molecule type" value="Genomic_DNA"/>
</dbReference>
<dbReference type="SMR" id="O24677"/>
<dbReference type="BioCyc" id="MetaCyc:MONOMER-14391"/>
<dbReference type="GO" id="GO:0051213">
    <property type="term" value="F:dioxygenase activity"/>
    <property type="evidence" value="ECO:0007669"/>
    <property type="project" value="UniProtKB-KW"/>
</dbReference>
<dbReference type="GO" id="GO:0019380">
    <property type="term" value="P:3-phenylpropionate catabolic process"/>
    <property type="evidence" value="ECO:0007669"/>
    <property type="project" value="TreeGrafter"/>
</dbReference>
<dbReference type="CDD" id="cd00667">
    <property type="entry name" value="ring_hydroxylating_dioxygenases_beta"/>
    <property type="match status" value="1"/>
</dbReference>
<dbReference type="Gene3D" id="3.10.450.50">
    <property type="match status" value="1"/>
</dbReference>
<dbReference type="InterPro" id="IPR032710">
    <property type="entry name" value="NTF2-like_dom_sf"/>
</dbReference>
<dbReference type="InterPro" id="IPR000391">
    <property type="entry name" value="Rng_hydr_dOase-bsu"/>
</dbReference>
<dbReference type="NCBIfam" id="NF007479">
    <property type="entry name" value="PRK10069.1"/>
    <property type="match status" value="1"/>
</dbReference>
<dbReference type="PANTHER" id="PTHR41534:SF2">
    <property type="entry name" value="3-PHENYLPROPIONATE_CINNAMIC ACID DIOXYGENASE SUBUNIT BETA"/>
    <property type="match status" value="1"/>
</dbReference>
<dbReference type="PANTHER" id="PTHR41534">
    <property type="entry name" value="BLR3401 PROTEIN"/>
    <property type="match status" value="1"/>
</dbReference>
<dbReference type="Pfam" id="PF00866">
    <property type="entry name" value="Ring_hydroxyl_B"/>
    <property type="match status" value="1"/>
</dbReference>
<dbReference type="SUPFAM" id="SSF54427">
    <property type="entry name" value="NTF2-like"/>
    <property type="match status" value="1"/>
</dbReference>